<name>Y4RG_SINFN</name>
<feature type="chain" id="PRO_0000200941" description="Uncharacterized protein y4rG">
    <location>
        <begin position="1"/>
        <end position="135"/>
    </location>
</feature>
<feature type="region of interest" description="Disordered" evidence="1">
    <location>
        <begin position="1"/>
        <end position="36"/>
    </location>
</feature>
<geneLocation type="plasmid">
    <name>sym pNGR234a</name>
</geneLocation>
<protein>
    <recommendedName>
        <fullName>Uncharacterized protein y4rG</fullName>
    </recommendedName>
</protein>
<organism>
    <name type="scientific">Sinorhizobium fredii (strain NBRC 101917 / NGR234)</name>
    <dbReference type="NCBI Taxonomy" id="394"/>
    <lineage>
        <taxon>Bacteria</taxon>
        <taxon>Pseudomonadati</taxon>
        <taxon>Pseudomonadota</taxon>
        <taxon>Alphaproteobacteria</taxon>
        <taxon>Hyphomicrobiales</taxon>
        <taxon>Rhizobiaceae</taxon>
        <taxon>Sinorhizobium/Ensifer group</taxon>
        <taxon>Sinorhizobium</taxon>
    </lineage>
</organism>
<comment type="similarity">
    <text evidence="2">Belongs to the transposase 8 family.</text>
</comment>
<sequence length="135" mass="14779">MSHAEKPMSDSVNHHHHRTFEVLTAEPVRSRRKPRHWSDEEKAQLVAEALSPGANVSAIARSQGLDPSQLYAWRRKALSSGMVAPLTEGAPAPVKFTRFEAVGSSMVEIVVGDIVVRAGADVDPDHLAKILRVVR</sequence>
<evidence type="ECO:0000256" key="1">
    <source>
        <dbReference type="SAM" id="MobiDB-lite"/>
    </source>
</evidence>
<evidence type="ECO:0000305" key="2"/>
<reference key="1">
    <citation type="journal article" date="1997" name="Nature">
        <title>Molecular basis of symbiosis between Rhizobium and legumes.</title>
        <authorList>
            <person name="Freiberg C.A."/>
            <person name="Fellay R."/>
            <person name="Bairoch A."/>
            <person name="Broughton W.J."/>
            <person name="Rosenthal A."/>
            <person name="Perret X."/>
        </authorList>
    </citation>
    <scope>NUCLEOTIDE SEQUENCE [LARGE SCALE GENOMIC DNA]</scope>
    <source>
        <strain>NBRC 101917 / NGR234</strain>
    </source>
</reference>
<reference key="2">
    <citation type="journal article" date="2009" name="Appl. Environ. Microbiol.">
        <title>Rhizobium sp. strain NGR234 possesses a remarkable number of secretion systems.</title>
        <authorList>
            <person name="Schmeisser C."/>
            <person name="Liesegang H."/>
            <person name="Krysciak D."/>
            <person name="Bakkou N."/>
            <person name="Le Quere A."/>
            <person name="Wollherr A."/>
            <person name="Heinemeyer I."/>
            <person name="Morgenstern B."/>
            <person name="Pommerening-Roeser A."/>
            <person name="Flores M."/>
            <person name="Palacios R."/>
            <person name="Brenner S."/>
            <person name="Gottschalk G."/>
            <person name="Schmitz R.A."/>
            <person name="Broughton W.J."/>
            <person name="Perret X."/>
            <person name="Strittmatter A.W."/>
            <person name="Streit W.R."/>
        </authorList>
    </citation>
    <scope>NUCLEOTIDE SEQUENCE [LARGE SCALE GENOMIC DNA]</scope>
    <source>
        <strain>NBRC 101917 / NGR234</strain>
    </source>
</reference>
<accession>P55640</accession>
<keyword id="KW-0614">Plasmid</keyword>
<keyword id="KW-1185">Reference proteome</keyword>
<proteinExistence type="inferred from homology"/>
<gene>
    <name type="ordered locus">NGR_a01800</name>
    <name type="ORF">y4rG</name>
</gene>
<dbReference type="EMBL" id="U00090">
    <property type="protein sequence ID" value="AAB91832.1"/>
    <property type="molecule type" value="Genomic_DNA"/>
</dbReference>
<dbReference type="RefSeq" id="NP_444045.1">
    <property type="nucleotide sequence ID" value="NC_000914.2"/>
</dbReference>
<dbReference type="SMR" id="P55640"/>
<dbReference type="STRING" id="394.NGR_c05860"/>
<dbReference type="KEGG" id="rhi:NGR_a01800"/>
<dbReference type="PATRIC" id="fig|394.7.peg.178"/>
<dbReference type="eggNOG" id="COG2963">
    <property type="taxonomic scope" value="Bacteria"/>
</dbReference>
<dbReference type="HOGENOM" id="CLU_113764_1_1_5"/>
<dbReference type="OrthoDB" id="9800877at2"/>
<dbReference type="Proteomes" id="UP000001054">
    <property type="component" value="Plasmid pNGR234a"/>
</dbReference>
<dbReference type="GO" id="GO:0043565">
    <property type="term" value="F:sequence-specific DNA binding"/>
    <property type="evidence" value="ECO:0007669"/>
    <property type="project" value="InterPro"/>
</dbReference>
<dbReference type="GO" id="GO:0004803">
    <property type="term" value="F:transposase activity"/>
    <property type="evidence" value="ECO:0007669"/>
    <property type="project" value="InterPro"/>
</dbReference>
<dbReference type="GO" id="GO:0006313">
    <property type="term" value="P:DNA transposition"/>
    <property type="evidence" value="ECO:0007669"/>
    <property type="project" value="InterPro"/>
</dbReference>
<dbReference type="Gene3D" id="1.10.10.10">
    <property type="entry name" value="Winged helix-like DNA-binding domain superfamily/Winged helix DNA-binding domain"/>
    <property type="match status" value="1"/>
</dbReference>
<dbReference type="InterPro" id="IPR002514">
    <property type="entry name" value="Transposase_8"/>
</dbReference>
<dbReference type="InterPro" id="IPR010921">
    <property type="entry name" value="Trp_repressor/repl_initiator"/>
</dbReference>
<dbReference type="InterPro" id="IPR036388">
    <property type="entry name" value="WH-like_DNA-bd_sf"/>
</dbReference>
<dbReference type="PANTHER" id="PTHR37936">
    <property type="entry name" value="TRANSPOSASE INSC FOR INSERTION ELEMENT IS2A-RELATED"/>
    <property type="match status" value="1"/>
</dbReference>
<dbReference type="PANTHER" id="PTHR37936:SF3">
    <property type="entry name" value="TRANSPOSASE INSC FOR INSERTION ELEMENT IS2A-RELATED"/>
    <property type="match status" value="1"/>
</dbReference>
<dbReference type="Pfam" id="PF01527">
    <property type="entry name" value="HTH_Tnp_1"/>
    <property type="match status" value="1"/>
</dbReference>
<dbReference type="SUPFAM" id="SSF48295">
    <property type="entry name" value="TrpR-like"/>
    <property type="match status" value="1"/>
</dbReference>